<name>RNH_BARBK</name>
<comment type="function">
    <text evidence="1">Endonuclease that specifically degrades the RNA of RNA-DNA hybrids.</text>
</comment>
<comment type="catalytic activity">
    <reaction evidence="1">
        <text>Endonucleolytic cleavage to 5'-phosphomonoester.</text>
        <dbReference type="EC" id="3.1.26.4"/>
    </reaction>
</comment>
<comment type="cofactor">
    <cofactor evidence="1">
        <name>Mg(2+)</name>
        <dbReference type="ChEBI" id="CHEBI:18420"/>
    </cofactor>
    <text evidence="1">Binds 1 Mg(2+) ion per subunit. May bind a second metal ion at a regulatory site, or after substrate binding.</text>
</comment>
<comment type="subunit">
    <text evidence="1">Monomer.</text>
</comment>
<comment type="subcellular location">
    <subcellularLocation>
        <location evidence="1">Cytoplasm</location>
    </subcellularLocation>
</comment>
<comment type="similarity">
    <text evidence="1">Belongs to the RNase H family.</text>
</comment>
<dbReference type="EC" id="3.1.26.4" evidence="1"/>
<dbReference type="EMBL" id="CP000524">
    <property type="protein sequence ID" value="ABM44987.1"/>
    <property type="molecule type" value="Genomic_DNA"/>
</dbReference>
<dbReference type="RefSeq" id="WP_005766426.1">
    <property type="nucleotide sequence ID" value="NC_008783.1"/>
</dbReference>
<dbReference type="SMR" id="A1URX4"/>
<dbReference type="STRING" id="360095.BARBAKC583_0409"/>
<dbReference type="GeneID" id="4684383"/>
<dbReference type="KEGG" id="bbk:BARBAKC583_0409"/>
<dbReference type="PATRIC" id="fig|360095.6.peg.391"/>
<dbReference type="eggNOG" id="COG0328">
    <property type="taxonomic scope" value="Bacteria"/>
</dbReference>
<dbReference type="HOGENOM" id="CLU_030894_6_0_5"/>
<dbReference type="OrthoDB" id="7845843at2"/>
<dbReference type="Proteomes" id="UP000000643">
    <property type="component" value="Chromosome"/>
</dbReference>
<dbReference type="GO" id="GO:0005737">
    <property type="term" value="C:cytoplasm"/>
    <property type="evidence" value="ECO:0007669"/>
    <property type="project" value="UniProtKB-SubCell"/>
</dbReference>
<dbReference type="GO" id="GO:0000287">
    <property type="term" value="F:magnesium ion binding"/>
    <property type="evidence" value="ECO:0007669"/>
    <property type="project" value="UniProtKB-UniRule"/>
</dbReference>
<dbReference type="GO" id="GO:0003676">
    <property type="term" value="F:nucleic acid binding"/>
    <property type="evidence" value="ECO:0007669"/>
    <property type="project" value="InterPro"/>
</dbReference>
<dbReference type="GO" id="GO:0004523">
    <property type="term" value="F:RNA-DNA hybrid ribonuclease activity"/>
    <property type="evidence" value="ECO:0007669"/>
    <property type="project" value="UniProtKB-UniRule"/>
</dbReference>
<dbReference type="GO" id="GO:0043137">
    <property type="term" value="P:DNA replication, removal of RNA primer"/>
    <property type="evidence" value="ECO:0007669"/>
    <property type="project" value="TreeGrafter"/>
</dbReference>
<dbReference type="CDD" id="cd09278">
    <property type="entry name" value="RNase_HI_prokaryote_like"/>
    <property type="match status" value="1"/>
</dbReference>
<dbReference type="FunFam" id="3.30.420.10:FF:000089">
    <property type="entry name" value="Ribonuclease H"/>
    <property type="match status" value="1"/>
</dbReference>
<dbReference type="Gene3D" id="3.30.420.10">
    <property type="entry name" value="Ribonuclease H-like superfamily/Ribonuclease H"/>
    <property type="match status" value="1"/>
</dbReference>
<dbReference type="HAMAP" id="MF_00042">
    <property type="entry name" value="RNase_H"/>
    <property type="match status" value="1"/>
</dbReference>
<dbReference type="InterPro" id="IPR050092">
    <property type="entry name" value="RNase_H"/>
</dbReference>
<dbReference type="InterPro" id="IPR012337">
    <property type="entry name" value="RNaseH-like_sf"/>
</dbReference>
<dbReference type="InterPro" id="IPR002156">
    <property type="entry name" value="RNaseH_domain"/>
</dbReference>
<dbReference type="InterPro" id="IPR036397">
    <property type="entry name" value="RNaseH_sf"/>
</dbReference>
<dbReference type="InterPro" id="IPR022892">
    <property type="entry name" value="RNaseHI"/>
</dbReference>
<dbReference type="NCBIfam" id="NF001236">
    <property type="entry name" value="PRK00203.1"/>
    <property type="match status" value="1"/>
</dbReference>
<dbReference type="PANTHER" id="PTHR10642">
    <property type="entry name" value="RIBONUCLEASE H1"/>
    <property type="match status" value="1"/>
</dbReference>
<dbReference type="PANTHER" id="PTHR10642:SF26">
    <property type="entry name" value="RIBONUCLEASE H1"/>
    <property type="match status" value="1"/>
</dbReference>
<dbReference type="Pfam" id="PF00075">
    <property type="entry name" value="RNase_H"/>
    <property type="match status" value="1"/>
</dbReference>
<dbReference type="SUPFAM" id="SSF53098">
    <property type="entry name" value="Ribonuclease H-like"/>
    <property type="match status" value="1"/>
</dbReference>
<dbReference type="PROSITE" id="PS50879">
    <property type="entry name" value="RNASE_H_1"/>
    <property type="match status" value="1"/>
</dbReference>
<reference key="1">
    <citation type="submission" date="2006-12" db="EMBL/GenBank/DDBJ databases">
        <authorList>
            <person name="Hendrix L."/>
            <person name="Mohamoud Y."/>
            <person name="Radune D."/>
            <person name="Shvartsbeyn A."/>
            <person name="Daugherty S."/>
            <person name="Dodson R."/>
            <person name="Durkin A.S."/>
            <person name="Harkins D."/>
            <person name="Huot H."/>
            <person name="Kothari S.P."/>
            <person name="Madupu R."/>
            <person name="Li J."/>
            <person name="Nelson W.C."/>
            <person name="Shrivastava S."/>
            <person name="Giglio M.G."/>
            <person name="Haft D."/>
            <person name="Selengut J."/>
            <person name="Fraser-Ligget C."/>
            <person name="Seshadri R."/>
        </authorList>
    </citation>
    <scope>NUCLEOTIDE SEQUENCE [LARGE SCALE GENOMIC DNA]</scope>
    <source>
        <strain>ATCC 35685 / KC583 / Herrer 020/F12,63</strain>
    </source>
</reference>
<keyword id="KW-0963">Cytoplasm</keyword>
<keyword id="KW-0255">Endonuclease</keyword>
<keyword id="KW-0378">Hydrolase</keyword>
<keyword id="KW-0460">Magnesium</keyword>
<keyword id="KW-0479">Metal-binding</keyword>
<keyword id="KW-0540">Nuclease</keyword>
<protein>
    <recommendedName>
        <fullName evidence="1">Ribonuclease H</fullName>
        <shortName evidence="1">RNase H</shortName>
        <ecNumber evidence="1">3.1.26.4</ecNumber>
    </recommendedName>
</protein>
<proteinExistence type="inferred from homology"/>
<evidence type="ECO:0000255" key="1">
    <source>
        <dbReference type="HAMAP-Rule" id="MF_00042"/>
    </source>
</evidence>
<evidence type="ECO:0000255" key="2">
    <source>
        <dbReference type="PROSITE-ProRule" id="PRU00408"/>
    </source>
</evidence>
<feature type="chain" id="PRO_0000332560" description="Ribonuclease H">
    <location>
        <begin position="1"/>
        <end position="155"/>
    </location>
</feature>
<feature type="domain" description="RNase H type-1" evidence="2">
    <location>
        <begin position="4"/>
        <end position="145"/>
    </location>
</feature>
<feature type="binding site" evidence="1">
    <location>
        <position position="13"/>
    </location>
    <ligand>
        <name>Mg(2+)</name>
        <dbReference type="ChEBI" id="CHEBI:18420"/>
        <label>1</label>
    </ligand>
</feature>
<feature type="binding site" evidence="1">
    <location>
        <position position="13"/>
    </location>
    <ligand>
        <name>Mg(2+)</name>
        <dbReference type="ChEBI" id="CHEBI:18420"/>
        <label>2</label>
    </ligand>
</feature>
<feature type="binding site" evidence="1">
    <location>
        <position position="51"/>
    </location>
    <ligand>
        <name>Mg(2+)</name>
        <dbReference type="ChEBI" id="CHEBI:18420"/>
        <label>1</label>
    </ligand>
</feature>
<feature type="binding site" evidence="1">
    <location>
        <position position="73"/>
    </location>
    <ligand>
        <name>Mg(2+)</name>
        <dbReference type="ChEBI" id="CHEBI:18420"/>
        <label>1</label>
    </ligand>
</feature>
<feature type="binding site" evidence="1">
    <location>
        <position position="137"/>
    </location>
    <ligand>
        <name>Mg(2+)</name>
        <dbReference type="ChEBI" id="CHEBI:18420"/>
        <label>2</label>
    </ligand>
</feature>
<organism>
    <name type="scientific">Bartonella bacilliformis (strain ATCC 35685 / KC583 / Herrer 020/F12,63)</name>
    <dbReference type="NCBI Taxonomy" id="360095"/>
    <lineage>
        <taxon>Bacteria</taxon>
        <taxon>Pseudomonadati</taxon>
        <taxon>Pseudomonadota</taxon>
        <taxon>Alphaproteobacteria</taxon>
        <taxon>Hyphomicrobiales</taxon>
        <taxon>Bartonellaceae</taxon>
        <taxon>Bartonella</taxon>
    </lineage>
</organism>
<accession>A1URX4</accession>
<sequence>MLSETKVIEIYTDGACSGNPGLGGWGAILRWNSHERELYGGKEYTTNNQMELMAAICALNALKESCSIDLYTDSVYVRNGISLWLENWKKNNWRTASKSPVKNMELWQALDGACARHNVRWHWVKGHAGHPDNERADALARKAITEYRQNGYFKG</sequence>
<gene>
    <name evidence="1" type="primary">rnhA</name>
    <name type="ordered locus">BARBAKC583_0409</name>
</gene>